<name>DDIT3_BOVIN</name>
<proteinExistence type="evidence at transcript level"/>
<protein>
    <recommendedName>
        <fullName>DNA damage-inducible transcript 3 protein</fullName>
        <shortName>DDIT-3</shortName>
    </recommendedName>
    <alternativeName>
        <fullName>C/EBP zeta</fullName>
    </alternativeName>
    <alternativeName>
        <fullName>C/EBP-homologous protein</fullName>
        <shortName>CHOP</shortName>
    </alternativeName>
    <alternativeName>
        <fullName>C/EBP-homologous protein 10</fullName>
        <shortName>CHOP-10</shortName>
    </alternativeName>
    <alternativeName>
        <fullName>CCAAT/enhancer-binding protein homologous protein</fullName>
    </alternativeName>
    <alternativeName>
        <fullName>Growth arrest and DNA-damage-inducible protein GADD153</fullName>
    </alternativeName>
</protein>
<accession>Q0IIB6</accession>
<gene>
    <name type="primary">DDIT3</name>
    <name type="synonym">CHOP</name>
    <name type="synonym">CHOP10</name>
    <name type="synonym">GADD153</name>
</gene>
<comment type="function">
    <text evidence="1">Multifunctional transcription factor in ER stress response. Plays an essential role in the response to a wide variety of cell stresses and induces cell cycle arrest and apoptosis in response to ER stress. Plays a dual role both as an inhibitor of CCAAT/enhancer-binding protein (C/EBP) function and as an activator of other genes. Acts as a dominant-negative regulator of C/EBP-induced transcription: dimerizes with members of the C/EBP family, impairs their association with C/EBP binding sites in the promoter regions, and inhibits the expression of C/EBP regulated genes. Positively regulates the transcription of TRIB3, IL6, IL8, IL23, TNFRSF10B/DR5, PPP1R15A/GADD34, BBC3/PUMA, BCL2L11/BIM and ERO1L. Negatively regulates; expression of BCL2 and MYOD1, ATF4-dependent transcriptional activation of asparagine synthetase (ASNS), CEBPA-dependent transcriptional activation of hepcidin (HAMP) and CEBPB-mediated expression of peroxisome proliferator-activated receptor gamma (PPARG). Inhibits the canonical Wnt signaling pathway by binding to TCF7L2/TCF4, impairing its DNA-binding properties and repressing its transcriptional activity. Plays a regulatory role in the inflammatory response through the induction of caspase-11 (CASP4/CASP11) which induces the activation of caspase-1 (CASP1) and both these caspases increase the activation of pro-IL1B to mature IL1B which is involved in the inflammatory response (By similarity).</text>
</comment>
<comment type="subunit">
    <text evidence="1">Heterodimer (By similarity). Interacts with TCF7L2/TCF4, EP300/P300, HDAC1, HDAC5 and HDAC6. Interacts with TRIB3 which blocks its association with EP300/P300. Interacts with FOXO3, CEBPB and ATF4 (By similarity).</text>
</comment>
<comment type="subcellular location">
    <subcellularLocation>
        <location evidence="1">Cytoplasm</location>
    </subcellularLocation>
    <subcellularLocation>
        <location evidence="3">Nucleus</location>
    </subcellularLocation>
    <text evidence="1">Present in the cytoplasm under non-stressed conditions and ER stress leads to its nuclear accumulation.</text>
</comment>
<comment type="domain">
    <text evidence="1">The N-terminal region is necessary for its proteasomal degradation, transcriptional activity and interaction with EP300/P300.</text>
</comment>
<comment type="PTM">
    <text evidence="1">Ubiquitinated, leading to its degradation by the proteasome.</text>
</comment>
<comment type="PTM">
    <text evidence="1">Phosphorylation at serine residues by MAPK14 enhances its transcriptional activation activity while phosphorylation at serine residues by CK2 inhibits its transcriptional activation activity.</text>
</comment>
<comment type="similarity">
    <text evidence="5">Belongs to the bZIP family.</text>
</comment>
<keyword id="KW-0010">Activator</keyword>
<keyword id="KW-0053">Apoptosis</keyword>
<keyword id="KW-0131">Cell cycle</keyword>
<keyword id="KW-0963">Cytoplasm</keyword>
<keyword id="KW-0238">DNA-binding</keyword>
<keyword id="KW-0338">Growth arrest</keyword>
<keyword id="KW-0539">Nucleus</keyword>
<keyword id="KW-0597">Phosphoprotein</keyword>
<keyword id="KW-1185">Reference proteome</keyword>
<keyword id="KW-0678">Repressor</keyword>
<keyword id="KW-0346">Stress response</keyword>
<keyword id="KW-0804">Transcription</keyword>
<keyword id="KW-0805">Transcription regulation</keyword>
<keyword id="KW-0832">Ubl conjugation</keyword>
<keyword id="KW-0834">Unfolded protein response</keyword>
<keyword id="KW-0879">Wnt signaling pathway</keyword>
<reference key="1">
    <citation type="submission" date="2006-08" db="EMBL/GenBank/DDBJ databases">
        <authorList>
            <consortium name="NIH - Mammalian Gene Collection (MGC) project"/>
        </authorList>
    </citation>
    <scope>NUCLEOTIDE SEQUENCE [LARGE SCALE MRNA]</scope>
    <source>
        <strain>Hereford</strain>
        <tissue>Hypothalamus</tissue>
    </source>
</reference>
<feature type="chain" id="PRO_0000285215" description="DNA damage-inducible transcript 3 protein">
    <location>
        <begin position="1"/>
        <end position="168"/>
    </location>
</feature>
<feature type="domain" description="bZIP" evidence="3">
    <location>
        <begin position="98"/>
        <end position="161"/>
    </location>
</feature>
<feature type="region of interest" description="N-terminal" evidence="1">
    <location>
        <begin position="10"/>
        <end position="26"/>
    </location>
</feature>
<feature type="region of interest" description="Interaction with TRIB3" evidence="1">
    <location>
        <begin position="10"/>
        <end position="18"/>
    </location>
</feature>
<feature type="region of interest" description="Disordered" evidence="4">
    <location>
        <begin position="31"/>
        <end position="141"/>
    </location>
</feature>
<feature type="region of interest" description="Basic motif" evidence="3">
    <location>
        <begin position="100"/>
        <end position="129"/>
    </location>
</feature>
<feature type="region of interest" description="Leucine-zipper" evidence="3">
    <location>
        <begin position="133"/>
        <end position="147"/>
    </location>
</feature>
<feature type="compositionally biased region" description="Low complexity" evidence="4">
    <location>
        <begin position="76"/>
        <end position="90"/>
    </location>
</feature>
<feature type="compositionally biased region" description="Basic and acidic residues" evidence="4">
    <location>
        <begin position="118"/>
        <end position="141"/>
    </location>
</feature>
<feature type="modified residue" description="Phosphoserine; by CK2" evidence="2">
    <location>
        <position position="14"/>
    </location>
</feature>
<feature type="modified residue" description="Phosphoserine; by CK2" evidence="2">
    <location>
        <position position="15"/>
    </location>
</feature>
<feature type="modified residue" description="Phosphoserine; by CK2" evidence="2">
    <location>
        <position position="30"/>
    </location>
</feature>
<feature type="modified residue" description="Phosphoserine; by CK2" evidence="2">
    <location>
        <position position="31"/>
    </location>
</feature>
<feature type="modified residue" description="Phosphoserine; by MAPK14" evidence="2">
    <location>
        <position position="78"/>
    </location>
</feature>
<feature type="modified residue" description="Phosphoserine; by MAPK14" evidence="2">
    <location>
        <position position="81"/>
    </location>
</feature>
<organism>
    <name type="scientific">Bos taurus</name>
    <name type="common">Bovine</name>
    <dbReference type="NCBI Taxonomy" id="9913"/>
    <lineage>
        <taxon>Eukaryota</taxon>
        <taxon>Metazoa</taxon>
        <taxon>Chordata</taxon>
        <taxon>Craniata</taxon>
        <taxon>Vertebrata</taxon>
        <taxon>Euteleostomi</taxon>
        <taxon>Mammalia</taxon>
        <taxon>Eutheria</taxon>
        <taxon>Laurasiatheria</taxon>
        <taxon>Artiodactyla</taxon>
        <taxon>Ruminantia</taxon>
        <taxon>Pecora</taxon>
        <taxon>Bovidae</taxon>
        <taxon>Bovinae</taxon>
        <taxon>Bos</taxon>
    </lineage>
</organism>
<dbReference type="EMBL" id="BC122721">
    <property type="protein sequence ID" value="AAI22722.1"/>
    <property type="molecule type" value="mRNA"/>
</dbReference>
<dbReference type="RefSeq" id="NP_001071631.1">
    <property type="nucleotide sequence ID" value="NM_001078163.1"/>
</dbReference>
<dbReference type="SMR" id="Q0IIB6"/>
<dbReference type="FunCoup" id="Q0IIB6">
    <property type="interactions" value="1140"/>
</dbReference>
<dbReference type="STRING" id="9913.ENSBTAP00000042185"/>
<dbReference type="PaxDb" id="9913-ENSBTAP00000042185"/>
<dbReference type="Ensembl" id="ENSBTAT00000089669.1">
    <property type="protein sequence ID" value="ENSBTAP00000085440.1"/>
    <property type="gene ID" value="ENSBTAG00000031544.3"/>
</dbReference>
<dbReference type="GeneID" id="777788"/>
<dbReference type="KEGG" id="bta:777788"/>
<dbReference type="CTD" id="1649"/>
<dbReference type="VEuPathDB" id="HostDB:ENSBTAG00000031544"/>
<dbReference type="VGNC" id="VGNC:27947">
    <property type="gene designation" value="DDIT3"/>
</dbReference>
<dbReference type="eggNOG" id="KOG3119">
    <property type="taxonomic scope" value="Eukaryota"/>
</dbReference>
<dbReference type="GeneTree" id="ENSGT00390000006305"/>
<dbReference type="HOGENOM" id="CLU_135108_0_0_1"/>
<dbReference type="InParanoid" id="Q0IIB6"/>
<dbReference type="OrthoDB" id="8962665at2759"/>
<dbReference type="TreeFam" id="TF105006"/>
<dbReference type="Proteomes" id="UP000009136">
    <property type="component" value="Chromosome 5"/>
</dbReference>
<dbReference type="Bgee" id="ENSBTAG00000031544">
    <property type="expression patterns" value="Expressed in oocyte and 103 other cell types or tissues"/>
</dbReference>
<dbReference type="GO" id="GO:1990622">
    <property type="term" value="C:CHOP-ATF3 complex"/>
    <property type="evidence" value="ECO:0000318"/>
    <property type="project" value="GO_Central"/>
</dbReference>
<dbReference type="GO" id="GO:1990617">
    <property type="term" value="C:CHOP-ATF4 complex"/>
    <property type="evidence" value="ECO:0000318"/>
    <property type="project" value="GO_Central"/>
</dbReference>
<dbReference type="GO" id="GO:0036488">
    <property type="term" value="C:CHOP-C/EBP complex"/>
    <property type="evidence" value="ECO:0000318"/>
    <property type="project" value="GO_Central"/>
</dbReference>
<dbReference type="GO" id="GO:0005737">
    <property type="term" value="C:cytoplasm"/>
    <property type="evidence" value="ECO:0000318"/>
    <property type="project" value="GO_Central"/>
</dbReference>
<dbReference type="GO" id="GO:0005634">
    <property type="term" value="C:nucleus"/>
    <property type="evidence" value="ECO:0000250"/>
    <property type="project" value="UniProtKB"/>
</dbReference>
<dbReference type="GO" id="GO:0008140">
    <property type="term" value="F:cAMP response element binding protein binding"/>
    <property type="evidence" value="ECO:0000250"/>
    <property type="project" value="UniProtKB"/>
</dbReference>
<dbReference type="GO" id="GO:0003677">
    <property type="term" value="F:DNA binding"/>
    <property type="evidence" value="ECO:0000250"/>
    <property type="project" value="UniProtKB"/>
</dbReference>
<dbReference type="GO" id="GO:0001228">
    <property type="term" value="F:DNA-binding transcription activator activity, RNA polymerase II-specific"/>
    <property type="evidence" value="ECO:0000318"/>
    <property type="project" value="GO_Central"/>
</dbReference>
<dbReference type="GO" id="GO:0003700">
    <property type="term" value="F:DNA-binding transcription factor activity"/>
    <property type="evidence" value="ECO:0000250"/>
    <property type="project" value="UniProtKB"/>
</dbReference>
<dbReference type="GO" id="GO:0046982">
    <property type="term" value="F:protein heterodimerization activity"/>
    <property type="evidence" value="ECO:0000250"/>
    <property type="project" value="UniProtKB"/>
</dbReference>
<dbReference type="GO" id="GO:0000978">
    <property type="term" value="F:RNA polymerase II cis-regulatory region sequence-specific DNA binding"/>
    <property type="evidence" value="ECO:0000318"/>
    <property type="project" value="GO_Central"/>
</dbReference>
<dbReference type="GO" id="GO:0006915">
    <property type="term" value="P:apoptotic process"/>
    <property type="evidence" value="ECO:0000250"/>
    <property type="project" value="UniProtKB"/>
</dbReference>
<dbReference type="GO" id="GO:0001955">
    <property type="term" value="P:blood vessel maturation"/>
    <property type="evidence" value="ECO:0000250"/>
    <property type="project" value="UniProtKB"/>
</dbReference>
<dbReference type="GO" id="GO:0030968">
    <property type="term" value="P:endoplasmic reticulum unfolded protein response"/>
    <property type="evidence" value="ECO:0000250"/>
    <property type="project" value="UniProtKB"/>
</dbReference>
<dbReference type="GO" id="GO:0006983">
    <property type="term" value="P:ER overload response"/>
    <property type="evidence" value="ECO:0000318"/>
    <property type="project" value="GO_Central"/>
</dbReference>
<dbReference type="GO" id="GO:0070059">
    <property type="term" value="P:intrinsic apoptotic signaling pathway in response to endoplasmic reticulum stress"/>
    <property type="evidence" value="ECO:0000250"/>
    <property type="project" value="UniProtKB"/>
</dbReference>
<dbReference type="GO" id="GO:0045892">
    <property type="term" value="P:negative regulation of DNA-templated transcription"/>
    <property type="evidence" value="ECO:0000250"/>
    <property type="project" value="UniProtKB"/>
</dbReference>
<dbReference type="GO" id="GO:0045662">
    <property type="term" value="P:negative regulation of myoblast differentiation"/>
    <property type="evidence" value="ECO:0000250"/>
    <property type="project" value="UniProtKB"/>
</dbReference>
<dbReference type="GO" id="GO:0000122">
    <property type="term" value="P:negative regulation of transcription by RNA polymerase II"/>
    <property type="evidence" value="ECO:0000318"/>
    <property type="project" value="GO_Central"/>
</dbReference>
<dbReference type="GO" id="GO:0045893">
    <property type="term" value="P:positive regulation of DNA-templated transcription"/>
    <property type="evidence" value="ECO:0000250"/>
    <property type="project" value="UniProtKB"/>
</dbReference>
<dbReference type="GO" id="GO:0032757">
    <property type="term" value="P:positive regulation of interleukin-8 production"/>
    <property type="evidence" value="ECO:0000250"/>
    <property type="project" value="UniProtKB"/>
</dbReference>
<dbReference type="GO" id="GO:2001244">
    <property type="term" value="P:positive regulation of intrinsic apoptotic signaling pathway"/>
    <property type="evidence" value="ECO:0000250"/>
    <property type="project" value="UniProtKB"/>
</dbReference>
<dbReference type="GO" id="GO:0043525">
    <property type="term" value="P:positive regulation of neuron apoptotic process"/>
    <property type="evidence" value="ECO:0000250"/>
    <property type="project" value="UniProtKB"/>
</dbReference>
<dbReference type="GO" id="GO:0043161">
    <property type="term" value="P:proteasome-mediated ubiquitin-dependent protein catabolic process"/>
    <property type="evidence" value="ECO:0000250"/>
    <property type="project" value="UniProtKB"/>
</dbReference>
<dbReference type="GO" id="GO:0010506">
    <property type="term" value="P:regulation of autophagy"/>
    <property type="evidence" value="ECO:0000250"/>
    <property type="project" value="UniProtKB"/>
</dbReference>
<dbReference type="GO" id="GO:0051726">
    <property type="term" value="P:regulation of cell cycle"/>
    <property type="evidence" value="ECO:0007669"/>
    <property type="project" value="UniProtKB-KW"/>
</dbReference>
<dbReference type="GO" id="GO:0006355">
    <property type="term" value="P:regulation of DNA-templated transcription"/>
    <property type="evidence" value="ECO:0000250"/>
    <property type="project" value="UniProtKB"/>
</dbReference>
<dbReference type="GO" id="GO:0051209">
    <property type="term" value="P:release of sequestered calcium ion into cytosol"/>
    <property type="evidence" value="ECO:0000250"/>
    <property type="project" value="UniProtKB"/>
</dbReference>
<dbReference type="GO" id="GO:0034976">
    <property type="term" value="P:response to endoplasmic reticulum stress"/>
    <property type="evidence" value="ECO:0000250"/>
    <property type="project" value="UniProtKB"/>
</dbReference>
<dbReference type="GO" id="GO:0042594">
    <property type="term" value="P:response to starvation"/>
    <property type="evidence" value="ECO:0000250"/>
    <property type="project" value="UniProtKB"/>
</dbReference>
<dbReference type="GO" id="GO:0006986">
    <property type="term" value="P:response to unfolded protein"/>
    <property type="evidence" value="ECO:0000250"/>
    <property type="project" value="UniProtKB"/>
</dbReference>
<dbReference type="GO" id="GO:0016055">
    <property type="term" value="P:Wnt signaling pathway"/>
    <property type="evidence" value="ECO:0007669"/>
    <property type="project" value="UniProtKB-KW"/>
</dbReference>
<dbReference type="FunFam" id="1.20.5.170:FF:000066">
    <property type="entry name" value="DNA damage-inducible transcript 3 protein"/>
    <property type="match status" value="1"/>
</dbReference>
<dbReference type="Gene3D" id="1.20.5.170">
    <property type="match status" value="1"/>
</dbReference>
<dbReference type="InterPro" id="IPR004827">
    <property type="entry name" value="bZIP"/>
</dbReference>
<dbReference type="InterPro" id="IPR016670">
    <property type="entry name" value="DNA_damage_induc_transcript_3"/>
</dbReference>
<dbReference type="PANTHER" id="PTHR16833">
    <property type="entry name" value="DNA DAMAGE-INDUCIBLE TRANSCRIPT 3 DDIT3"/>
    <property type="match status" value="1"/>
</dbReference>
<dbReference type="PANTHER" id="PTHR16833:SF0">
    <property type="entry name" value="DNA DAMAGE-INDUCIBLE TRANSCRIPT 3 PROTEIN"/>
    <property type="match status" value="1"/>
</dbReference>
<dbReference type="PIRSF" id="PIRSF016571">
    <property type="entry name" value="C/EBPzeta_CHOP_DDIT3"/>
    <property type="match status" value="1"/>
</dbReference>
<dbReference type="SMART" id="SM00338">
    <property type="entry name" value="BRLZ"/>
    <property type="match status" value="1"/>
</dbReference>
<dbReference type="PROSITE" id="PS50217">
    <property type="entry name" value="BZIP"/>
    <property type="match status" value="1"/>
</dbReference>
<sequence>MAAESLPFSFGALSSWELEAWYEDLQEVLSSDENRGTCVSPPGNKEEESKSFTTLDPASLAWLTEEPGPPEVTHTSQSPCSPESSQSSLAQEEEEEDQGRTRKRKQSGQSPARAGKQRMKEKEQENERKVAQLAEENERLKQEIERLTREVEATRRALIDRMVNLHQA</sequence>
<evidence type="ECO:0000250" key="1"/>
<evidence type="ECO:0000250" key="2">
    <source>
        <dbReference type="UniProtKB" id="P35639"/>
    </source>
</evidence>
<evidence type="ECO:0000255" key="3">
    <source>
        <dbReference type="PROSITE-ProRule" id="PRU00978"/>
    </source>
</evidence>
<evidence type="ECO:0000256" key="4">
    <source>
        <dbReference type="SAM" id="MobiDB-lite"/>
    </source>
</evidence>
<evidence type="ECO:0000305" key="5"/>